<reference key="1">
    <citation type="journal article" date="2002" name="J. Bacteriol.">
        <title>Whole-genome comparison of Mycobacterium tuberculosis clinical and laboratory strains.</title>
        <authorList>
            <person name="Fleischmann R.D."/>
            <person name="Alland D."/>
            <person name="Eisen J.A."/>
            <person name="Carpenter L."/>
            <person name="White O."/>
            <person name="Peterson J.D."/>
            <person name="DeBoy R.T."/>
            <person name="Dodson R.J."/>
            <person name="Gwinn M.L."/>
            <person name="Haft D.H."/>
            <person name="Hickey E.K."/>
            <person name="Kolonay J.F."/>
            <person name="Nelson W.C."/>
            <person name="Umayam L.A."/>
            <person name="Ermolaeva M.D."/>
            <person name="Salzberg S.L."/>
            <person name="Delcher A."/>
            <person name="Utterback T.R."/>
            <person name="Weidman J.F."/>
            <person name="Khouri H.M."/>
            <person name="Gill J."/>
            <person name="Mikula A."/>
            <person name="Bishai W."/>
            <person name="Jacobs W.R. Jr."/>
            <person name="Venter J.C."/>
            <person name="Fraser C.M."/>
        </authorList>
    </citation>
    <scope>NUCLEOTIDE SEQUENCE [LARGE SCALE GENOMIC DNA]</scope>
    <source>
        <strain>CDC 1551 / Oshkosh</strain>
    </source>
</reference>
<keyword id="KW-0046">Antibiotic resistance</keyword>
<keyword id="KW-1003">Cell membrane</keyword>
<keyword id="KW-0472">Membrane</keyword>
<keyword id="KW-1185">Reference proteome</keyword>
<keyword id="KW-0812">Transmembrane</keyword>
<keyword id="KW-1133">Transmembrane helix</keyword>
<keyword id="KW-0813">Transport</keyword>
<name>FLQE2_MYCTO</name>
<protein>
    <recommendedName>
        <fullName>Fluoroquinolones export permease protein MT2760</fullName>
    </recommendedName>
</protein>
<organism>
    <name type="scientific">Mycobacterium tuberculosis (strain CDC 1551 / Oshkosh)</name>
    <dbReference type="NCBI Taxonomy" id="83331"/>
    <lineage>
        <taxon>Bacteria</taxon>
        <taxon>Bacillati</taxon>
        <taxon>Actinomycetota</taxon>
        <taxon>Actinomycetes</taxon>
        <taxon>Mycobacteriales</taxon>
        <taxon>Mycobacteriaceae</taxon>
        <taxon>Mycobacterium</taxon>
        <taxon>Mycobacterium tuberculosis complex</taxon>
    </lineage>
</organism>
<accession>P9WJB2</accession>
<accession>I1SB22</accession>
<accession>O07188</accession>
<accession>Q7D6S1</accession>
<feature type="chain" id="PRO_0000427860" description="Fluoroquinolones export permease protein MT2760">
    <location>
        <begin position="1"/>
        <end position="252"/>
    </location>
</feature>
<feature type="transmembrane region" description="Helical" evidence="2">
    <location>
        <begin position="31"/>
        <end position="51"/>
    </location>
</feature>
<feature type="transmembrane region" description="Helical" evidence="2">
    <location>
        <begin position="69"/>
        <end position="89"/>
    </location>
</feature>
<feature type="transmembrane region" description="Helical" evidence="2">
    <location>
        <begin position="119"/>
        <end position="139"/>
    </location>
</feature>
<feature type="transmembrane region" description="Helical" evidence="2">
    <location>
        <begin position="148"/>
        <end position="168"/>
    </location>
</feature>
<feature type="transmembrane region" description="Helical" evidence="2">
    <location>
        <begin position="176"/>
        <end position="196"/>
    </location>
</feature>
<feature type="transmembrane region" description="Helical" evidence="2">
    <location>
        <begin position="224"/>
        <end position="244"/>
    </location>
</feature>
<comment type="function">
    <text evidence="1">Part of the ABC transporter complex involved in fluoroquinolones export. Probably responsible for the translocation of the substrate across the membrane (By similarity).</text>
</comment>
<comment type="subunit">
    <text evidence="1">The complex is composed of 2 ATP-binding proteins and 2 transmembrane proteins.</text>
</comment>
<comment type="subcellular location">
    <subcellularLocation>
        <location evidence="3">Cell membrane</location>
        <topology evidence="3">Multi-pass membrane protein</topology>
    </subcellularLocation>
</comment>
<proteinExistence type="inferred from homology"/>
<evidence type="ECO:0000250" key="1"/>
<evidence type="ECO:0000255" key="2"/>
<evidence type="ECO:0000305" key="3"/>
<sequence>MRAISSLAGPRALAAFGRNDIRGTYRDPLLVMLVIAPVIWTTGVALLTPLFTEMLARRYGFDLVGYYPLILTAFLLLTSIIVAGALAAFLVLDDVDAGTMTALRVTPVPLSVFFGYRAATVMVVTTIYVVATMSCSGILEPGLVSSLIPIGLVAGLSAVVTLLLILAVANNKIQGLAMVRALGMLIAGLPCLPWFISSNWNLAFGVLPPYWAAKAFWVASDHGTWWPYLVGGAVYNLAIVWVLFRRFRAKHA</sequence>
<dbReference type="EMBL" id="AE000516">
    <property type="protein sequence ID" value="AAK47075.1"/>
    <property type="molecule type" value="Genomic_DNA"/>
</dbReference>
<dbReference type="PIR" id="A70529">
    <property type="entry name" value="A70529"/>
</dbReference>
<dbReference type="RefSeq" id="WP_003413897.1">
    <property type="nucleotide sequence ID" value="NZ_KK341227.1"/>
</dbReference>
<dbReference type="SMR" id="P9WJB2"/>
<dbReference type="KEGG" id="mtc:MT2760"/>
<dbReference type="PATRIC" id="fig|83331.31.peg.2972"/>
<dbReference type="HOGENOM" id="CLU_098655_0_0_11"/>
<dbReference type="Proteomes" id="UP000001020">
    <property type="component" value="Chromosome"/>
</dbReference>
<dbReference type="GO" id="GO:0005886">
    <property type="term" value="C:plasma membrane"/>
    <property type="evidence" value="ECO:0007669"/>
    <property type="project" value="UniProtKB-SubCell"/>
</dbReference>
<dbReference type="GO" id="GO:0046677">
    <property type="term" value="P:response to antibiotic"/>
    <property type="evidence" value="ECO:0007669"/>
    <property type="project" value="UniProtKB-KW"/>
</dbReference>
<gene>
    <name type="ordered locus">MT2760</name>
</gene>